<protein>
    <recommendedName>
        <fullName evidence="6">Response regulator RR06</fullName>
    </recommendedName>
</protein>
<sequence length="217" mass="25204">MNILVADDEEMIREGIAAFLTEEGYHVIMAKDGQEVLEKFQDLPIHLMVLDLMMPRKSGFEVLKEINQKHDIPVIVLSALGDETTQSQVFDLYADDHVTKPFSLVLLVKRIKALIRRYYVIEDIWRYQDVTVDFTSYKAHYKNEEIDLKPKELLVLKCLIQHKNQVLSREQILEEISKDVADLPCDRVVDVYIRTLRKKLALDCIVTVKNVGYKISL</sequence>
<feature type="chain" id="PRO_0000459068" description="Response regulator RR06">
    <location>
        <begin position="1"/>
        <end position="217"/>
    </location>
</feature>
<feature type="domain" description="Response regulatory" evidence="2">
    <location>
        <begin position="2"/>
        <end position="115"/>
    </location>
</feature>
<feature type="DNA-binding region" description="OmpR/PhoB-type" evidence="3">
    <location>
        <begin position="122"/>
        <end position="217"/>
    </location>
</feature>
<feature type="modified residue" description="4-aspartylphosphate" evidence="2">
    <location>
        <position position="51"/>
    </location>
</feature>
<feature type="mutagenesis site" description="Has no effect on phosphorylation of RR06 by StkP." evidence="5">
    <original>D</original>
    <variation>A</variation>
    <location>
        <position position="51"/>
    </location>
</feature>
<comment type="function">
    <text evidence="4 5">Member of the two-component regulatory system HK06/RR06 involved in regulation of target genes, including choline-binding protein CbpA (PubMed:15897461). Binds to the promoter region of CbpA and directly activates transcription (PubMed:15897461, PubMed:22311926).</text>
</comment>
<comment type="PTM">
    <text evidence="5">Phosphorylated at threonine residues by StkP; threonine phosphorylation enhances RR06 binding to DNA and may also increase expression of CbpA (PubMed:22311926). May be de-phosphorylated by PhpP (PubMed:22311926).</text>
</comment>
<comment type="disruption phenotype">
    <text evidence="4">Expression of CbpA down-regulated at transcript and protein levels (PubMed:15897461). Significantly increases nasopharyngeal colonization in mouse CD-1 strain intranasal infection model at 48 h and 96 h post-infection (PubMed:15897461). Significantly increases numbers of bacteria found in the mouse lung at 96 h post-infection (PubMed:15897461).</text>
</comment>
<comment type="miscellaneous">
    <text evidence="1">Probably part of an rr06-hk06 operon.</text>
</comment>
<organism evidence="9">
    <name type="scientific">Streptococcus pneumoniae serotype 2 (strain D39 / NCTC 7466)</name>
    <dbReference type="NCBI Taxonomy" id="373153"/>
    <lineage>
        <taxon>Bacteria</taxon>
        <taxon>Bacillati</taxon>
        <taxon>Bacillota</taxon>
        <taxon>Bacilli</taxon>
        <taxon>Lactobacillales</taxon>
        <taxon>Streptococcaceae</taxon>
        <taxon>Streptococcus</taxon>
    </lineage>
</organism>
<proteinExistence type="evidence at protein level"/>
<dbReference type="EMBL" id="CP000410">
    <property type="protein sequence ID" value="ABJ54595.1"/>
    <property type="molecule type" value="Genomic_DNA"/>
</dbReference>
<dbReference type="RefSeq" id="WP_001024075.1">
    <property type="nucleotide sequence ID" value="NZ_JAMLJR010000007.1"/>
</dbReference>
<dbReference type="SMR" id="A0A0H2ZNF6"/>
<dbReference type="PaxDb" id="373153-SPD_2020"/>
<dbReference type="GeneID" id="45652585"/>
<dbReference type="KEGG" id="spd:SPD_2020"/>
<dbReference type="eggNOG" id="COG0745">
    <property type="taxonomic scope" value="Bacteria"/>
</dbReference>
<dbReference type="HOGENOM" id="CLU_000445_30_3_9"/>
<dbReference type="BioCyc" id="SPNE373153:G1G6V-2167-MONOMER"/>
<dbReference type="Proteomes" id="UP000001452">
    <property type="component" value="Chromosome"/>
</dbReference>
<dbReference type="GO" id="GO:0005829">
    <property type="term" value="C:cytosol"/>
    <property type="evidence" value="ECO:0007669"/>
    <property type="project" value="TreeGrafter"/>
</dbReference>
<dbReference type="GO" id="GO:0032993">
    <property type="term" value="C:protein-DNA complex"/>
    <property type="evidence" value="ECO:0007669"/>
    <property type="project" value="TreeGrafter"/>
</dbReference>
<dbReference type="GO" id="GO:0000156">
    <property type="term" value="F:phosphorelay response regulator activity"/>
    <property type="evidence" value="ECO:0007669"/>
    <property type="project" value="TreeGrafter"/>
</dbReference>
<dbReference type="GO" id="GO:0000976">
    <property type="term" value="F:transcription cis-regulatory region binding"/>
    <property type="evidence" value="ECO:0007669"/>
    <property type="project" value="TreeGrafter"/>
</dbReference>
<dbReference type="GO" id="GO:0006355">
    <property type="term" value="P:regulation of DNA-templated transcription"/>
    <property type="evidence" value="ECO:0007669"/>
    <property type="project" value="InterPro"/>
</dbReference>
<dbReference type="CDD" id="cd17574">
    <property type="entry name" value="REC_OmpR"/>
    <property type="match status" value="1"/>
</dbReference>
<dbReference type="CDD" id="cd00383">
    <property type="entry name" value="trans_reg_C"/>
    <property type="match status" value="1"/>
</dbReference>
<dbReference type="FunFam" id="3.40.50.2300:FF:000283">
    <property type="entry name" value="DNA-binding response regulator"/>
    <property type="match status" value="1"/>
</dbReference>
<dbReference type="Gene3D" id="3.40.50.2300">
    <property type="match status" value="1"/>
</dbReference>
<dbReference type="Gene3D" id="1.10.10.10">
    <property type="entry name" value="Winged helix-like DNA-binding domain superfamily/Winged helix DNA-binding domain"/>
    <property type="match status" value="1"/>
</dbReference>
<dbReference type="InterPro" id="IPR011006">
    <property type="entry name" value="CheY-like_superfamily"/>
</dbReference>
<dbReference type="InterPro" id="IPR001867">
    <property type="entry name" value="OmpR/PhoB-type_DNA-bd"/>
</dbReference>
<dbReference type="InterPro" id="IPR001789">
    <property type="entry name" value="Sig_transdc_resp-reg_receiver"/>
</dbReference>
<dbReference type="InterPro" id="IPR039420">
    <property type="entry name" value="WalR-like"/>
</dbReference>
<dbReference type="InterPro" id="IPR036388">
    <property type="entry name" value="WH-like_DNA-bd_sf"/>
</dbReference>
<dbReference type="PANTHER" id="PTHR48111:SF21">
    <property type="entry name" value="DNA-BINDING DUAL MASTER TRANSCRIPTIONAL REGULATOR RPAA"/>
    <property type="match status" value="1"/>
</dbReference>
<dbReference type="PANTHER" id="PTHR48111">
    <property type="entry name" value="REGULATOR OF RPOS"/>
    <property type="match status" value="1"/>
</dbReference>
<dbReference type="Pfam" id="PF00072">
    <property type="entry name" value="Response_reg"/>
    <property type="match status" value="1"/>
</dbReference>
<dbReference type="Pfam" id="PF00486">
    <property type="entry name" value="Trans_reg_C"/>
    <property type="match status" value="1"/>
</dbReference>
<dbReference type="SMART" id="SM00448">
    <property type="entry name" value="REC"/>
    <property type="match status" value="1"/>
</dbReference>
<dbReference type="SMART" id="SM00862">
    <property type="entry name" value="Trans_reg_C"/>
    <property type="match status" value="1"/>
</dbReference>
<dbReference type="SUPFAM" id="SSF52172">
    <property type="entry name" value="CheY-like"/>
    <property type="match status" value="1"/>
</dbReference>
<dbReference type="PROSITE" id="PS51755">
    <property type="entry name" value="OMPR_PHOB"/>
    <property type="match status" value="1"/>
</dbReference>
<dbReference type="PROSITE" id="PS50110">
    <property type="entry name" value="RESPONSE_REGULATORY"/>
    <property type="match status" value="1"/>
</dbReference>
<accession>A0A0H2ZNF6</accession>
<gene>
    <name evidence="6" type="primary">rr06</name>
    <name evidence="8" type="ordered locus">SPD_2020</name>
</gene>
<reference evidence="9" key="1">
    <citation type="journal article" date="2007" name="J. Bacteriol.">
        <title>Genome sequence of Avery's virulent serotype 2 strain D39 of Streptococcus pneumoniae and comparison with that of unencapsulated laboratory strain R6.</title>
        <authorList>
            <person name="Lanie J.A."/>
            <person name="Ng W.-L."/>
            <person name="Kazmierczak K.M."/>
            <person name="Andrzejewski T.M."/>
            <person name="Davidsen T.M."/>
            <person name="Wayne K.J."/>
            <person name="Tettelin H."/>
            <person name="Glass J.I."/>
            <person name="Winkler M.E."/>
        </authorList>
    </citation>
    <scope>NUCLEOTIDE SEQUENCE [LARGE SCALE GENOMIC DNA]</scope>
    <source>
        <strain evidence="9">D39 / NCTC 7466</strain>
    </source>
</reference>
<reference evidence="7" key="2">
    <citation type="journal article" date="2005" name="Proc. Natl. Acad. Sci. U.S.A.">
        <title>The two-component signal transduction system RR06/HK06 regulates expression of cbpA in Streptococcus pneumoniae.</title>
        <authorList>
            <person name="Standish A.J."/>
            <person name="Stroeher U.H."/>
            <person name="Paton J.C."/>
        </authorList>
    </citation>
    <scope>FUNCTION</scope>
    <scope>DISRUPTION PHENOTYPE</scope>
</reference>
<reference evidence="7" key="3">
    <citation type="journal article" date="2012" name="Infect. Immun.">
        <title>Strain-specific regulatory role of eukaryote-like serine/threonine phosphatase in pneumococcal adherence.</title>
        <authorList>
            <person name="Agarwal S."/>
            <person name="Agarwal S."/>
            <person name="Pancholi P."/>
            <person name="Pancholi V."/>
        </authorList>
    </citation>
    <scope>FUNCTION</scope>
    <scope>PHOSPHORYLATION</scope>
    <scope>MUTAGENESIS OF ASP-51</scope>
    <source>
        <strain>Serotype 6A (strain EF3314)</strain>
    </source>
</reference>
<evidence type="ECO:0000250" key="1">
    <source>
        <dbReference type="UniProtKB" id="Q8DN02"/>
    </source>
</evidence>
<evidence type="ECO:0000255" key="2">
    <source>
        <dbReference type="PROSITE-ProRule" id="PRU00169"/>
    </source>
</evidence>
<evidence type="ECO:0000255" key="3">
    <source>
        <dbReference type="PROSITE-ProRule" id="PRU01091"/>
    </source>
</evidence>
<evidence type="ECO:0000269" key="4">
    <source>
    </source>
</evidence>
<evidence type="ECO:0000269" key="5">
    <source>
    </source>
</evidence>
<evidence type="ECO:0000303" key="6">
    <source>
    </source>
</evidence>
<evidence type="ECO:0000305" key="7"/>
<evidence type="ECO:0000312" key="8">
    <source>
        <dbReference type="EMBL" id="ABJ54595.1"/>
    </source>
</evidence>
<evidence type="ECO:0000312" key="9">
    <source>
        <dbReference type="Proteomes" id="UP000001452"/>
    </source>
</evidence>
<name>RR06_STRP2</name>
<keyword id="KW-0010">Activator</keyword>
<keyword id="KW-0238">DNA-binding</keyword>
<keyword id="KW-0597">Phosphoprotein</keyword>
<keyword id="KW-1185">Reference proteome</keyword>
<keyword id="KW-0804">Transcription</keyword>
<keyword id="KW-0805">Transcription regulation</keyword>
<keyword id="KW-0902">Two-component regulatory system</keyword>